<reference key="1">
    <citation type="journal article" date="2005" name="Nucleic Acids Res.">
        <title>Genome dynamics and diversity of Shigella species, the etiologic agents of bacillary dysentery.</title>
        <authorList>
            <person name="Yang F."/>
            <person name="Yang J."/>
            <person name="Zhang X."/>
            <person name="Chen L."/>
            <person name="Jiang Y."/>
            <person name="Yan Y."/>
            <person name="Tang X."/>
            <person name="Wang J."/>
            <person name="Xiong Z."/>
            <person name="Dong J."/>
            <person name="Xue Y."/>
            <person name="Zhu Y."/>
            <person name="Xu X."/>
            <person name="Sun L."/>
            <person name="Chen S."/>
            <person name="Nie H."/>
            <person name="Peng J."/>
            <person name="Xu J."/>
            <person name="Wang Y."/>
            <person name="Yuan Z."/>
            <person name="Wen Y."/>
            <person name="Yao Z."/>
            <person name="Shen Y."/>
            <person name="Qiang B."/>
            <person name="Hou Y."/>
            <person name="Yu J."/>
            <person name="Jin Q."/>
        </authorList>
    </citation>
    <scope>NUCLEOTIDE SEQUENCE [LARGE SCALE GENOMIC DNA]</scope>
    <source>
        <strain>Sd197</strain>
    </source>
</reference>
<feature type="chain" id="PRO_1000054144" description="Cyclic pyranopterin monophosphate synthase">
    <location>
        <begin position="1"/>
        <end position="161"/>
    </location>
</feature>
<feature type="active site" evidence="1">
    <location>
        <position position="128"/>
    </location>
</feature>
<feature type="binding site" evidence="1">
    <location>
        <begin position="75"/>
        <end position="77"/>
    </location>
    <ligand>
        <name>substrate</name>
    </ligand>
</feature>
<feature type="binding site" evidence="1">
    <location>
        <begin position="113"/>
        <end position="114"/>
    </location>
    <ligand>
        <name>substrate</name>
    </ligand>
</feature>
<keyword id="KW-0456">Lyase</keyword>
<keyword id="KW-0501">Molybdenum cofactor biosynthesis</keyword>
<keyword id="KW-1185">Reference proteome</keyword>
<gene>
    <name evidence="1" type="primary">moaC</name>
    <name type="ordered locus">SDY_0823</name>
</gene>
<dbReference type="EC" id="4.6.1.17" evidence="1"/>
<dbReference type="EMBL" id="CP000034">
    <property type="protein sequence ID" value="ABB61005.1"/>
    <property type="molecule type" value="Genomic_DNA"/>
</dbReference>
<dbReference type="RefSeq" id="WP_000080885.1">
    <property type="nucleotide sequence ID" value="NC_007606.1"/>
</dbReference>
<dbReference type="RefSeq" id="YP_402494.1">
    <property type="nucleotide sequence ID" value="NC_007606.1"/>
</dbReference>
<dbReference type="SMR" id="Q32I52"/>
<dbReference type="STRING" id="300267.SDY_0823"/>
<dbReference type="EnsemblBacteria" id="ABB61005">
    <property type="protein sequence ID" value="ABB61005"/>
    <property type="gene ID" value="SDY_0823"/>
</dbReference>
<dbReference type="GeneID" id="86945666"/>
<dbReference type="KEGG" id="sdy:SDY_0823"/>
<dbReference type="PATRIC" id="fig|300267.13.peg.949"/>
<dbReference type="HOGENOM" id="CLU_074693_1_1_6"/>
<dbReference type="UniPathway" id="UPA00344"/>
<dbReference type="Proteomes" id="UP000002716">
    <property type="component" value="Chromosome"/>
</dbReference>
<dbReference type="GO" id="GO:0061799">
    <property type="term" value="F:cyclic pyranopterin monophosphate synthase activity"/>
    <property type="evidence" value="ECO:0007669"/>
    <property type="project" value="UniProtKB-UniRule"/>
</dbReference>
<dbReference type="GO" id="GO:0006777">
    <property type="term" value="P:Mo-molybdopterin cofactor biosynthetic process"/>
    <property type="evidence" value="ECO:0007669"/>
    <property type="project" value="UniProtKB-UniRule"/>
</dbReference>
<dbReference type="CDD" id="cd01420">
    <property type="entry name" value="MoaC_PE"/>
    <property type="match status" value="1"/>
</dbReference>
<dbReference type="FunFam" id="3.30.70.640:FF:000001">
    <property type="entry name" value="Cyclic pyranopterin monophosphate synthase"/>
    <property type="match status" value="1"/>
</dbReference>
<dbReference type="Gene3D" id="3.30.70.640">
    <property type="entry name" value="Molybdopterin cofactor biosynthesis C (MoaC) domain"/>
    <property type="match status" value="1"/>
</dbReference>
<dbReference type="HAMAP" id="MF_01224_B">
    <property type="entry name" value="MoaC_B"/>
    <property type="match status" value="1"/>
</dbReference>
<dbReference type="InterPro" id="IPR023045">
    <property type="entry name" value="MoaC"/>
</dbReference>
<dbReference type="InterPro" id="IPR047594">
    <property type="entry name" value="MoaC_bact/euk"/>
</dbReference>
<dbReference type="InterPro" id="IPR036522">
    <property type="entry name" value="MoaC_sf"/>
</dbReference>
<dbReference type="InterPro" id="IPR050105">
    <property type="entry name" value="MoCo_biosynth_MoaA/MoaC"/>
</dbReference>
<dbReference type="InterPro" id="IPR002820">
    <property type="entry name" value="Mopterin_CF_biosynth-C_dom"/>
</dbReference>
<dbReference type="NCBIfam" id="TIGR00581">
    <property type="entry name" value="moaC"/>
    <property type="match status" value="1"/>
</dbReference>
<dbReference type="NCBIfam" id="NF006870">
    <property type="entry name" value="PRK09364.1"/>
    <property type="match status" value="1"/>
</dbReference>
<dbReference type="PANTHER" id="PTHR22960">
    <property type="entry name" value="MOLYBDOPTERIN COFACTOR SYNTHESIS PROTEIN A"/>
    <property type="match status" value="1"/>
</dbReference>
<dbReference type="Pfam" id="PF01967">
    <property type="entry name" value="MoaC"/>
    <property type="match status" value="1"/>
</dbReference>
<dbReference type="SUPFAM" id="SSF55040">
    <property type="entry name" value="Molybdenum cofactor biosynthesis protein C, MoaC"/>
    <property type="match status" value="1"/>
</dbReference>
<proteinExistence type="inferred from homology"/>
<sequence>MSQLTHINAAGEAHMVDVSAKAETVREARAEAFVTMRSETLAMIIDGRHHKGDVFATARIAGIQAAKRTWDLIPLCHPLMLSKVEVNLQAEPEHNRVRIETLCRLTGKTGVEMEALTAASVAALTIYDMCKAVQKDMVIGPVRLLAKSGGKSGDFKVEADD</sequence>
<comment type="function">
    <text evidence="1">Catalyzes the conversion of (8S)-3',8-cyclo-7,8-dihydroguanosine 5'-triphosphate to cyclic pyranopterin monophosphate (cPMP).</text>
</comment>
<comment type="catalytic activity">
    <reaction evidence="1">
        <text>(8S)-3',8-cyclo-7,8-dihydroguanosine 5'-triphosphate = cyclic pyranopterin phosphate + diphosphate</text>
        <dbReference type="Rhea" id="RHEA:49580"/>
        <dbReference type="ChEBI" id="CHEBI:33019"/>
        <dbReference type="ChEBI" id="CHEBI:59648"/>
        <dbReference type="ChEBI" id="CHEBI:131766"/>
        <dbReference type="EC" id="4.6.1.17"/>
    </reaction>
</comment>
<comment type="pathway">
    <text evidence="1">Cofactor biosynthesis; molybdopterin biosynthesis.</text>
</comment>
<comment type="subunit">
    <text evidence="1">Homohexamer; trimer of dimers.</text>
</comment>
<comment type="similarity">
    <text evidence="1">Belongs to the MoaC family.</text>
</comment>
<organism>
    <name type="scientific">Shigella dysenteriae serotype 1 (strain Sd197)</name>
    <dbReference type="NCBI Taxonomy" id="300267"/>
    <lineage>
        <taxon>Bacteria</taxon>
        <taxon>Pseudomonadati</taxon>
        <taxon>Pseudomonadota</taxon>
        <taxon>Gammaproteobacteria</taxon>
        <taxon>Enterobacterales</taxon>
        <taxon>Enterobacteriaceae</taxon>
        <taxon>Shigella</taxon>
    </lineage>
</organism>
<accession>Q32I52</accession>
<evidence type="ECO:0000255" key="1">
    <source>
        <dbReference type="HAMAP-Rule" id="MF_01224"/>
    </source>
</evidence>
<protein>
    <recommendedName>
        <fullName evidence="1">Cyclic pyranopterin monophosphate synthase</fullName>
        <ecNumber evidence="1">4.6.1.17</ecNumber>
    </recommendedName>
    <alternativeName>
        <fullName evidence="1">Molybdenum cofactor biosynthesis protein C</fullName>
    </alternativeName>
</protein>
<name>MOAC_SHIDS</name>